<evidence type="ECO:0000305" key="1"/>
<reference key="1">
    <citation type="submission" date="2005-08" db="EMBL/GenBank/DDBJ databases">
        <title>Annotation of mitochondrial genome of Ustilago maydis and comparative analysis of basidiomycete mtDNAs.</title>
        <authorList>
            <person name="Kennell J.C."/>
            <person name="Boehmer C."/>
        </authorList>
    </citation>
    <scope>NUCLEOTIDE SEQUENCE [LARGE SCALE GENOMIC DNA]</scope>
    <source>
        <strain>DSM 14603 / FGSC 9021 / UM521</strain>
    </source>
</reference>
<reference key="2">
    <citation type="journal article" date="2006" name="Nature">
        <title>Insights from the genome of the biotrophic fungal plant pathogen Ustilago maydis.</title>
        <authorList>
            <person name="Kaemper J."/>
            <person name="Kahmann R."/>
            <person name="Boelker M."/>
            <person name="Ma L.-J."/>
            <person name="Brefort T."/>
            <person name="Saville B.J."/>
            <person name="Banuett F."/>
            <person name="Kronstad J.W."/>
            <person name="Gold S.E."/>
            <person name="Mueller O."/>
            <person name="Perlin M.H."/>
            <person name="Woesten H.A.B."/>
            <person name="de Vries R."/>
            <person name="Ruiz-Herrera J."/>
            <person name="Reynaga-Pena C.G."/>
            <person name="Snetselaar K."/>
            <person name="McCann M."/>
            <person name="Perez-Martin J."/>
            <person name="Feldbruegge M."/>
            <person name="Basse C.W."/>
            <person name="Steinberg G."/>
            <person name="Ibeas J.I."/>
            <person name="Holloman W."/>
            <person name="Guzman P."/>
            <person name="Farman M.L."/>
            <person name="Stajich J.E."/>
            <person name="Sentandreu R."/>
            <person name="Gonzalez-Prieto J.M."/>
            <person name="Kennell J.C."/>
            <person name="Molina L."/>
            <person name="Schirawski J."/>
            <person name="Mendoza-Mendoza A."/>
            <person name="Greilinger D."/>
            <person name="Muench K."/>
            <person name="Roessel N."/>
            <person name="Scherer M."/>
            <person name="Vranes M."/>
            <person name="Ladendorf O."/>
            <person name="Vincon V."/>
            <person name="Fuchs U."/>
            <person name="Sandrock B."/>
            <person name="Meng S."/>
            <person name="Ho E.C.H."/>
            <person name="Cahill M.J."/>
            <person name="Boyce K.J."/>
            <person name="Klose J."/>
            <person name="Klosterman S.J."/>
            <person name="Deelstra H.J."/>
            <person name="Ortiz-Castellanos L."/>
            <person name="Li W."/>
            <person name="Sanchez-Alonso P."/>
            <person name="Schreier P.H."/>
            <person name="Haeuser-Hahn I."/>
            <person name="Vaupel M."/>
            <person name="Koopmann E."/>
            <person name="Friedrich G."/>
            <person name="Voss H."/>
            <person name="Schlueter T."/>
            <person name="Margolis J."/>
            <person name="Platt D."/>
            <person name="Swimmer C."/>
            <person name="Gnirke A."/>
            <person name="Chen F."/>
            <person name="Vysotskaia V."/>
            <person name="Mannhaupt G."/>
            <person name="Gueldener U."/>
            <person name="Muensterkoetter M."/>
            <person name="Haase D."/>
            <person name="Oesterheld M."/>
            <person name="Mewes H.-W."/>
            <person name="Mauceli E.W."/>
            <person name="DeCaprio D."/>
            <person name="Wade C.M."/>
            <person name="Butler J."/>
            <person name="Young S.K."/>
            <person name="Jaffe D.B."/>
            <person name="Calvo S.E."/>
            <person name="Nusbaum C."/>
            <person name="Galagan J.E."/>
            <person name="Birren B.W."/>
        </authorList>
    </citation>
    <scope>NUCLEOTIDE SEQUENCE [LARGE SCALE GENOMIC DNA]</scope>
    <source>
        <strain>DSM 14603 / FGSC 9021 / UM521</strain>
    </source>
</reference>
<name>RT03_MYCMD</name>
<feature type="chain" id="PRO_0000271168" description="Small ribosomal subunit protein uS3m">
    <location>
        <begin position="1"/>
        <end position="266"/>
    </location>
</feature>
<comment type="subcellular location">
    <subcellularLocation>
        <location>Mitochondrion</location>
    </subcellularLocation>
</comment>
<comment type="similarity">
    <text evidence="1">Belongs to the universal ribosomal protein uS3 family.</text>
</comment>
<organism>
    <name type="scientific">Mycosarcoma maydis</name>
    <name type="common">Corn smut fungus</name>
    <name type="synonym">Ustilago maydis</name>
    <dbReference type="NCBI Taxonomy" id="5270"/>
    <lineage>
        <taxon>Eukaryota</taxon>
        <taxon>Fungi</taxon>
        <taxon>Dikarya</taxon>
        <taxon>Basidiomycota</taxon>
        <taxon>Ustilaginomycotina</taxon>
        <taxon>Ustilaginomycetes</taxon>
        <taxon>Ustilaginales</taxon>
        <taxon>Ustilaginaceae</taxon>
        <taxon>Mycosarcoma</taxon>
    </lineage>
</organism>
<protein>
    <recommendedName>
        <fullName evidence="1">Small ribosomal subunit protein uS3m</fullName>
    </recommendedName>
    <alternativeName>
        <fullName>Ribosomal protein S3, mitochondrial</fullName>
    </alternativeName>
</protein>
<proteinExistence type="inferred from homology"/>
<gene>
    <name type="primary">MRPS3</name>
</gene>
<keyword id="KW-0496">Mitochondrion</keyword>
<keyword id="KW-1185">Reference proteome</keyword>
<keyword id="KW-0687">Ribonucleoprotein</keyword>
<keyword id="KW-0689">Ribosomal protein</keyword>
<sequence length="266" mass="29375">MPTIPSVYRLQQPQMQLNGVAPTHSFSKQYPGLGSTVSGNTSLNNSAICIINAYASGGTLNKKNTTKKNNTVSNNNSVSTTSFFISKPNFSHTNSKVTIQLFYYTASPKNHLVNTSNNDLTTVSSHFSDLSTTLAQLYQKEVHVIATRLYYPYLNSDILSQYLAHNGPSNTFMDFQEAILTNPSLHKTNLPAHISGIKVQVSGRLVTETVIPRITVKSYLIGSFQRNSNNTANKLGDFVTSIDYSKFTTKNELGAFTVKVWICQRS</sequence>
<geneLocation type="mitochondrion"/>
<accession>Q0H8Z0</accession>
<dbReference type="EMBL" id="DQ157700">
    <property type="protein sequence ID" value="AAZ67005.1"/>
    <property type="molecule type" value="Genomic_DNA"/>
</dbReference>
<dbReference type="EMBL" id="AACP01000278">
    <property type="status" value="NOT_ANNOTATED_CDS"/>
    <property type="molecule type" value="Genomic_DNA"/>
</dbReference>
<dbReference type="InParanoid" id="Q0H8Z0"/>
<dbReference type="Proteomes" id="UP000000561">
    <property type="component" value="Mitochondrion"/>
</dbReference>
<dbReference type="GO" id="GO:0005739">
    <property type="term" value="C:mitochondrion"/>
    <property type="evidence" value="ECO:0007669"/>
    <property type="project" value="UniProtKB-SubCell"/>
</dbReference>
<dbReference type="GO" id="GO:1990904">
    <property type="term" value="C:ribonucleoprotein complex"/>
    <property type="evidence" value="ECO:0007669"/>
    <property type="project" value="UniProtKB-KW"/>
</dbReference>
<dbReference type="GO" id="GO:0005840">
    <property type="term" value="C:ribosome"/>
    <property type="evidence" value="ECO:0007669"/>
    <property type="project" value="UniProtKB-KW"/>
</dbReference>
<dbReference type="GO" id="GO:0003735">
    <property type="term" value="F:structural constituent of ribosome"/>
    <property type="evidence" value="ECO:0007669"/>
    <property type="project" value="InterPro"/>
</dbReference>
<dbReference type="GO" id="GO:0006412">
    <property type="term" value="P:translation"/>
    <property type="evidence" value="ECO:0007669"/>
    <property type="project" value="InterPro"/>
</dbReference>
<dbReference type="Gene3D" id="3.30.1140.32">
    <property type="entry name" value="Ribosomal protein S3, C-terminal domain"/>
    <property type="match status" value="1"/>
</dbReference>
<dbReference type="InterPro" id="IPR036419">
    <property type="entry name" value="Ribosomal_S3_C_sf"/>
</dbReference>
<dbReference type="InterPro" id="IPR007980">
    <property type="entry name" value="Ribosomal_uS3m_fun"/>
</dbReference>
<dbReference type="Pfam" id="PF05316">
    <property type="entry name" value="VAR1"/>
    <property type="match status" value="1"/>
</dbReference>
<dbReference type="SUPFAM" id="SSF54821">
    <property type="entry name" value="Ribosomal protein S3 C-terminal domain"/>
    <property type="match status" value="1"/>
</dbReference>